<sequence length="463" mass="50160">MNTLIAITGLGIFCLLFEILNFRKGIVPFTILGLLGVLALNFYEFGTTASYYNNMITVSKFSTAFSSLFIILTIFLVALSHNFYENHQTKISDFIAIKVFLLAGAVAMVSFGNLAMFFLGIEILSIALYVLAASDRLNIKSNEAGMKYFLMGSFASGIILFGICLIYGAMGTFDIAEIHESSLSAELPIWFPIGMILMTIGMFFKIAAVPFHFWAPDVYEGSPALTTALMSTLAKVVAIATLFKLVSGLNLIPSLENQDLSNTFTNVILTISIASMTVGNIMALRQVNVKRMLAFSGISHAGFMLMTFLTIATSAGVLLYYTAAYALAGIAAFSVILYVCKNQDNEDITNFHGLGKTNPLLAAILTGSLLSMGGIPIFSGFFAKLFLFNQALHAGYVAIVIAAVINSIISVGYYFKLILAMYSKEPNEERTGKPFLIYAVAIISIGLNIALGLFPSLVLDLLN</sequence>
<name>NUON_FLAJ1</name>
<dbReference type="EC" id="7.1.1.-" evidence="1"/>
<dbReference type="EMBL" id="CP000685">
    <property type="protein sequence ID" value="ABQ04265.1"/>
    <property type="molecule type" value="Genomic_DNA"/>
</dbReference>
<dbReference type="RefSeq" id="WP_012023315.1">
    <property type="nucleotide sequence ID" value="NZ_MUGZ01000003.1"/>
</dbReference>
<dbReference type="SMR" id="A5FKK7"/>
<dbReference type="STRING" id="376686.Fjoh_1233"/>
<dbReference type="KEGG" id="fjo:Fjoh_1233"/>
<dbReference type="eggNOG" id="COG1007">
    <property type="taxonomic scope" value="Bacteria"/>
</dbReference>
<dbReference type="HOGENOM" id="CLU_007100_1_4_10"/>
<dbReference type="OrthoDB" id="9811718at2"/>
<dbReference type="Proteomes" id="UP000006694">
    <property type="component" value="Chromosome"/>
</dbReference>
<dbReference type="GO" id="GO:0005886">
    <property type="term" value="C:plasma membrane"/>
    <property type="evidence" value="ECO:0007669"/>
    <property type="project" value="UniProtKB-SubCell"/>
</dbReference>
<dbReference type="GO" id="GO:0008137">
    <property type="term" value="F:NADH dehydrogenase (ubiquinone) activity"/>
    <property type="evidence" value="ECO:0007669"/>
    <property type="project" value="InterPro"/>
</dbReference>
<dbReference type="GO" id="GO:0050136">
    <property type="term" value="F:NADH:ubiquinone reductase (non-electrogenic) activity"/>
    <property type="evidence" value="ECO:0007669"/>
    <property type="project" value="UniProtKB-UniRule"/>
</dbReference>
<dbReference type="GO" id="GO:0048038">
    <property type="term" value="F:quinone binding"/>
    <property type="evidence" value="ECO:0007669"/>
    <property type="project" value="UniProtKB-KW"/>
</dbReference>
<dbReference type="GO" id="GO:0042773">
    <property type="term" value="P:ATP synthesis coupled electron transport"/>
    <property type="evidence" value="ECO:0007669"/>
    <property type="project" value="InterPro"/>
</dbReference>
<dbReference type="HAMAP" id="MF_00445">
    <property type="entry name" value="NDH1_NuoN_1"/>
    <property type="match status" value="1"/>
</dbReference>
<dbReference type="InterPro" id="IPR010096">
    <property type="entry name" value="NADH-Q_OxRdtase_suN/2"/>
</dbReference>
<dbReference type="InterPro" id="IPR001750">
    <property type="entry name" value="ND/Mrp_TM"/>
</dbReference>
<dbReference type="NCBIfam" id="TIGR01770">
    <property type="entry name" value="NDH_I_N"/>
    <property type="match status" value="1"/>
</dbReference>
<dbReference type="PANTHER" id="PTHR22773">
    <property type="entry name" value="NADH DEHYDROGENASE"/>
    <property type="match status" value="1"/>
</dbReference>
<dbReference type="Pfam" id="PF00361">
    <property type="entry name" value="Proton_antipo_M"/>
    <property type="match status" value="1"/>
</dbReference>
<gene>
    <name evidence="1" type="primary">nuoN</name>
    <name type="ordered locus">Fjoh_1233</name>
</gene>
<reference key="1">
    <citation type="journal article" date="2009" name="Appl. Environ. Microbiol.">
        <title>Novel features of the polysaccharide-digesting gliding bacterium Flavobacterium johnsoniae as revealed by genome sequence analysis.</title>
        <authorList>
            <person name="McBride M.J."/>
            <person name="Xie G."/>
            <person name="Martens E.C."/>
            <person name="Lapidus A."/>
            <person name="Henrissat B."/>
            <person name="Rhodes R.G."/>
            <person name="Goltsman E."/>
            <person name="Wang W."/>
            <person name="Xu J."/>
            <person name="Hunnicutt D.W."/>
            <person name="Staroscik A.M."/>
            <person name="Hoover T.R."/>
            <person name="Cheng Y.Q."/>
            <person name="Stein J.L."/>
        </authorList>
    </citation>
    <scope>NUCLEOTIDE SEQUENCE [LARGE SCALE GENOMIC DNA]</scope>
    <source>
        <strain>ATCC 17061 / DSM 2064 / JCM 8514 / BCRC 14874 / CCUG 350202 / NBRC 14942 / NCIMB 11054 / UW101</strain>
    </source>
</reference>
<accession>A5FKK7</accession>
<organism>
    <name type="scientific">Flavobacterium johnsoniae (strain ATCC 17061 / DSM 2064 / JCM 8514 / BCRC 14874 / CCUG 350202 / NBRC 14942 / NCIMB 11054 / UW101)</name>
    <name type="common">Cytophaga johnsonae</name>
    <dbReference type="NCBI Taxonomy" id="376686"/>
    <lineage>
        <taxon>Bacteria</taxon>
        <taxon>Pseudomonadati</taxon>
        <taxon>Bacteroidota</taxon>
        <taxon>Flavobacteriia</taxon>
        <taxon>Flavobacteriales</taxon>
        <taxon>Flavobacteriaceae</taxon>
        <taxon>Flavobacterium</taxon>
    </lineage>
</organism>
<keyword id="KW-0997">Cell inner membrane</keyword>
<keyword id="KW-1003">Cell membrane</keyword>
<keyword id="KW-0472">Membrane</keyword>
<keyword id="KW-0520">NAD</keyword>
<keyword id="KW-0874">Quinone</keyword>
<keyword id="KW-1278">Translocase</keyword>
<keyword id="KW-0812">Transmembrane</keyword>
<keyword id="KW-1133">Transmembrane helix</keyword>
<keyword id="KW-0813">Transport</keyword>
<evidence type="ECO:0000255" key="1">
    <source>
        <dbReference type="HAMAP-Rule" id="MF_00445"/>
    </source>
</evidence>
<feature type="chain" id="PRO_0000391145" description="NADH-quinone oxidoreductase subunit N">
    <location>
        <begin position="1"/>
        <end position="463"/>
    </location>
</feature>
<feature type="transmembrane region" description="Helical" evidence="1">
    <location>
        <begin position="2"/>
        <end position="22"/>
    </location>
</feature>
<feature type="transmembrane region" description="Helical" evidence="1">
    <location>
        <begin position="25"/>
        <end position="45"/>
    </location>
</feature>
<feature type="transmembrane region" description="Helical" evidence="1">
    <location>
        <begin position="61"/>
        <end position="81"/>
    </location>
</feature>
<feature type="transmembrane region" description="Helical" evidence="1">
    <location>
        <begin position="91"/>
        <end position="110"/>
    </location>
</feature>
<feature type="transmembrane region" description="Helical" evidence="1">
    <location>
        <begin position="114"/>
        <end position="133"/>
    </location>
</feature>
<feature type="transmembrane region" description="Helical" evidence="1">
    <location>
        <begin position="149"/>
        <end position="169"/>
    </location>
</feature>
<feature type="transmembrane region" description="Helical" evidence="1">
    <location>
        <begin position="189"/>
        <end position="209"/>
    </location>
</feature>
<feature type="transmembrane region" description="Helical" evidence="1">
    <location>
        <begin position="223"/>
        <end position="243"/>
    </location>
</feature>
<feature type="transmembrane region" description="Helical" evidence="1">
    <location>
        <begin position="264"/>
        <end position="284"/>
    </location>
</feature>
<feature type="transmembrane region" description="Helical" evidence="1">
    <location>
        <begin position="292"/>
        <end position="312"/>
    </location>
</feature>
<feature type="transmembrane region" description="Helical" evidence="1">
    <location>
        <begin position="317"/>
        <end position="337"/>
    </location>
</feature>
<feature type="transmembrane region" description="Helical" evidence="1">
    <location>
        <begin position="362"/>
        <end position="382"/>
    </location>
</feature>
<feature type="transmembrane region" description="Helical" evidence="1">
    <location>
        <begin position="395"/>
        <end position="415"/>
    </location>
</feature>
<feature type="transmembrane region" description="Helical" evidence="1">
    <location>
        <begin position="434"/>
        <end position="454"/>
    </location>
</feature>
<proteinExistence type="inferred from homology"/>
<comment type="function">
    <text evidence="1">NDH-1 shuttles electrons from NADH, via FMN and iron-sulfur (Fe-S) centers, to quinones in the respiratory chain. The immediate electron acceptor for the enzyme in this species is believed to be a menaquinone. Couples the redox reaction to proton translocation (for every two electrons transferred, four hydrogen ions are translocated across the cytoplasmic membrane), and thus conserves the redox energy in a proton gradient.</text>
</comment>
<comment type="catalytic activity">
    <reaction evidence="1">
        <text>a quinone + NADH + 5 H(+)(in) = a quinol + NAD(+) + 4 H(+)(out)</text>
        <dbReference type="Rhea" id="RHEA:57888"/>
        <dbReference type="ChEBI" id="CHEBI:15378"/>
        <dbReference type="ChEBI" id="CHEBI:24646"/>
        <dbReference type="ChEBI" id="CHEBI:57540"/>
        <dbReference type="ChEBI" id="CHEBI:57945"/>
        <dbReference type="ChEBI" id="CHEBI:132124"/>
    </reaction>
</comment>
<comment type="subunit">
    <text evidence="1">NDH-1 is composed of 14 different subunits. Subunits NuoA, H, J, K, L, M, N constitute the membrane sector of the complex.</text>
</comment>
<comment type="subcellular location">
    <subcellularLocation>
        <location evidence="1">Cell inner membrane</location>
        <topology evidence="1">Multi-pass membrane protein</topology>
    </subcellularLocation>
</comment>
<comment type="similarity">
    <text evidence="1">Belongs to the complex I subunit 2 family.</text>
</comment>
<protein>
    <recommendedName>
        <fullName evidence="1">NADH-quinone oxidoreductase subunit N</fullName>
        <ecNumber evidence="1">7.1.1.-</ecNumber>
    </recommendedName>
    <alternativeName>
        <fullName evidence="1">NADH dehydrogenase I subunit N</fullName>
    </alternativeName>
    <alternativeName>
        <fullName evidence="1">NDH-1 subunit N</fullName>
    </alternativeName>
</protein>